<reference key="1">
    <citation type="journal article" date="2005" name="Science">
        <title>The transcriptional landscape of the mammalian genome.</title>
        <authorList>
            <person name="Carninci P."/>
            <person name="Kasukawa T."/>
            <person name="Katayama S."/>
            <person name="Gough J."/>
            <person name="Frith M.C."/>
            <person name="Maeda N."/>
            <person name="Oyama R."/>
            <person name="Ravasi T."/>
            <person name="Lenhard B."/>
            <person name="Wells C."/>
            <person name="Kodzius R."/>
            <person name="Shimokawa K."/>
            <person name="Bajic V.B."/>
            <person name="Brenner S.E."/>
            <person name="Batalov S."/>
            <person name="Forrest A.R."/>
            <person name="Zavolan M."/>
            <person name="Davis M.J."/>
            <person name="Wilming L.G."/>
            <person name="Aidinis V."/>
            <person name="Allen J.E."/>
            <person name="Ambesi-Impiombato A."/>
            <person name="Apweiler R."/>
            <person name="Aturaliya R.N."/>
            <person name="Bailey T.L."/>
            <person name="Bansal M."/>
            <person name="Baxter L."/>
            <person name="Beisel K.W."/>
            <person name="Bersano T."/>
            <person name="Bono H."/>
            <person name="Chalk A.M."/>
            <person name="Chiu K.P."/>
            <person name="Choudhary V."/>
            <person name="Christoffels A."/>
            <person name="Clutterbuck D.R."/>
            <person name="Crowe M.L."/>
            <person name="Dalla E."/>
            <person name="Dalrymple B.P."/>
            <person name="de Bono B."/>
            <person name="Della Gatta G."/>
            <person name="di Bernardo D."/>
            <person name="Down T."/>
            <person name="Engstrom P."/>
            <person name="Fagiolini M."/>
            <person name="Faulkner G."/>
            <person name="Fletcher C.F."/>
            <person name="Fukushima T."/>
            <person name="Furuno M."/>
            <person name="Futaki S."/>
            <person name="Gariboldi M."/>
            <person name="Georgii-Hemming P."/>
            <person name="Gingeras T.R."/>
            <person name="Gojobori T."/>
            <person name="Green R.E."/>
            <person name="Gustincich S."/>
            <person name="Harbers M."/>
            <person name="Hayashi Y."/>
            <person name="Hensch T.K."/>
            <person name="Hirokawa N."/>
            <person name="Hill D."/>
            <person name="Huminiecki L."/>
            <person name="Iacono M."/>
            <person name="Ikeo K."/>
            <person name="Iwama A."/>
            <person name="Ishikawa T."/>
            <person name="Jakt M."/>
            <person name="Kanapin A."/>
            <person name="Katoh M."/>
            <person name="Kawasawa Y."/>
            <person name="Kelso J."/>
            <person name="Kitamura H."/>
            <person name="Kitano H."/>
            <person name="Kollias G."/>
            <person name="Krishnan S.P."/>
            <person name="Kruger A."/>
            <person name="Kummerfeld S.K."/>
            <person name="Kurochkin I.V."/>
            <person name="Lareau L.F."/>
            <person name="Lazarevic D."/>
            <person name="Lipovich L."/>
            <person name="Liu J."/>
            <person name="Liuni S."/>
            <person name="McWilliam S."/>
            <person name="Madan Babu M."/>
            <person name="Madera M."/>
            <person name="Marchionni L."/>
            <person name="Matsuda H."/>
            <person name="Matsuzawa S."/>
            <person name="Miki H."/>
            <person name="Mignone F."/>
            <person name="Miyake S."/>
            <person name="Morris K."/>
            <person name="Mottagui-Tabar S."/>
            <person name="Mulder N."/>
            <person name="Nakano N."/>
            <person name="Nakauchi H."/>
            <person name="Ng P."/>
            <person name="Nilsson R."/>
            <person name="Nishiguchi S."/>
            <person name="Nishikawa S."/>
            <person name="Nori F."/>
            <person name="Ohara O."/>
            <person name="Okazaki Y."/>
            <person name="Orlando V."/>
            <person name="Pang K.C."/>
            <person name="Pavan W.J."/>
            <person name="Pavesi G."/>
            <person name="Pesole G."/>
            <person name="Petrovsky N."/>
            <person name="Piazza S."/>
            <person name="Reed J."/>
            <person name="Reid J.F."/>
            <person name="Ring B.Z."/>
            <person name="Ringwald M."/>
            <person name="Rost B."/>
            <person name="Ruan Y."/>
            <person name="Salzberg S.L."/>
            <person name="Sandelin A."/>
            <person name="Schneider C."/>
            <person name="Schoenbach C."/>
            <person name="Sekiguchi K."/>
            <person name="Semple C.A."/>
            <person name="Seno S."/>
            <person name="Sessa L."/>
            <person name="Sheng Y."/>
            <person name="Shibata Y."/>
            <person name="Shimada H."/>
            <person name="Shimada K."/>
            <person name="Silva D."/>
            <person name="Sinclair B."/>
            <person name="Sperling S."/>
            <person name="Stupka E."/>
            <person name="Sugiura K."/>
            <person name="Sultana R."/>
            <person name="Takenaka Y."/>
            <person name="Taki K."/>
            <person name="Tammoja K."/>
            <person name="Tan S.L."/>
            <person name="Tang S."/>
            <person name="Taylor M.S."/>
            <person name="Tegner J."/>
            <person name="Teichmann S.A."/>
            <person name="Ueda H.R."/>
            <person name="van Nimwegen E."/>
            <person name="Verardo R."/>
            <person name="Wei C.L."/>
            <person name="Yagi K."/>
            <person name="Yamanishi H."/>
            <person name="Zabarovsky E."/>
            <person name="Zhu S."/>
            <person name="Zimmer A."/>
            <person name="Hide W."/>
            <person name="Bult C."/>
            <person name="Grimmond S.M."/>
            <person name="Teasdale R.D."/>
            <person name="Liu E.T."/>
            <person name="Brusic V."/>
            <person name="Quackenbush J."/>
            <person name="Wahlestedt C."/>
            <person name="Mattick J.S."/>
            <person name="Hume D.A."/>
            <person name="Kai C."/>
            <person name="Sasaki D."/>
            <person name="Tomaru Y."/>
            <person name="Fukuda S."/>
            <person name="Kanamori-Katayama M."/>
            <person name="Suzuki M."/>
            <person name="Aoki J."/>
            <person name="Arakawa T."/>
            <person name="Iida J."/>
            <person name="Imamura K."/>
            <person name="Itoh M."/>
            <person name="Kato T."/>
            <person name="Kawaji H."/>
            <person name="Kawagashira N."/>
            <person name="Kawashima T."/>
            <person name="Kojima M."/>
            <person name="Kondo S."/>
            <person name="Konno H."/>
            <person name="Nakano K."/>
            <person name="Ninomiya N."/>
            <person name="Nishio T."/>
            <person name="Okada M."/>
            <person name="Plessy C."/>
            <person name="Shibata K."/>
            <person name="Shiraki T."/>
            <person name="Suzuki S."/>
            <person name="Tagami M."/>
            <person name="Waki K."/>
            <person name="Watahiki A."/>
            <person name="Okamura-Oho Y."/>
            <person name="Suzuki H."/>
            <person name="Kawai J."/>
            <person name="Hayashizaki Y."/>
        </authorList>
    </citation>
    <scope>NUCLEOTIDE SEQUENCE [LARGE SCALE MRNA] (ISOFORMS 1; 2 AND 3)</scope>
    <source>
        <strain>C57BL/6J</strain>
        <tissue>Embryonic stem cell</tissue>
        <tissue>Kidney</tissue>
        <tissue>Mammary gland</tissue>
        <tissue>Tongue</tissue>
    </source>
</reference>
<reference key="2">
    <citation type="journal article" date="2004" name="Genome Res.">
        <title>The status, quality, and expansion of the NIH full-length cDNA project: the Mammalian Gene Collection (MGC).</title>
        <authorList>
            <consortium name="The MGC Project Team"/>
        </authorList>
    </citation>
    <scope>NUCLEOTIDE SEQUENCE [LARGE SCALE MRNA] (ISOFORM 1)</scope>
    <source>
        <strain>FVB/N</strain>
        <tissue>Salivary gland</tissue>
    </source>
</reference>
<reference key="3">
    <citation type="journal article" date="2010" name="Cell">
        <title>A tissue-specific atlas of mouse protein phosphorylation and expression.</title>
        <authorList>
            <person name="Huttlin E.L."/>
            <person name="Jedrychowski M.P."/>
            <person name="Elias J.E."/>
            <person name="Goswami T."/>
            <person name="Rad R."/>
            <person name="Beausoleil S.A."/>
            <person name="Villen J."/>
            <person name="Haas W."/>
            <person name="Sowa M.E."/>
            <person name="Gygi S.P."/>
        </authorList>
    </citation>
    <scope>PHOSPHORYLATION [LARGE SCALE ANALYSIS] AT SER-93</scope>
    <scope>IDENTIFICATION BY MASS SPECTROMETRY [LARGE SCALE ANALYSIS]</scope>
    <source>
        <tissue>Kidney</tissue>
        <tissue>Liver</tissue>
        <tissue>Spleen</tissue>
    </source>
</reference>
<evidence type="ECO:0000250" key="1">
    <source>
        <dbReference type="UniProtKB" id="Q9H6X4"/>
    </source>
</evidence>
<evidence type="ECO:0000255" key="2"/>
<evidence type="ECO:0000256" key="3">
    <source>
        <dbReference type="SAM" id="MobiDB-lite"/>
    </source>
</evidence>
<evidence type="ECO:0000303" key="4">
    <source>
    </source>
</evidence>
<evidence type="ECO:0000305" key="5"/>
<evidence type="ECO:0007744" key="6">
    <source>
    </source>
</evidence>
<organism>
    <name type="scientific">Mus musculus</name>
    <name type="common">Mouse</name>
    <dbReference type="NCBI Taxonomy" id="10090"/>
    <lineage>
        <taxon>Eukaryota</taxon>
        <taxon>Metazoa</taxon>
        <taxon>Chordata</taxon>
        <taxon>Craniata</taxon>
        <taxon>Vertebrata</taxon>
        <taxon>Euteleostomi</taxon>
        <taxon>Mammalia</taxon>
        <taxon>Eutheria</taxon>
        <taxon>Euarchontoglires</taxon>
        <taxon>Glires</taxon>
        <taxon>Rodentia</taxon>
        <taxon>Myomorpha</taxon>
        <taxon>Muroidea</taxon>
        <taxon>Muridae</taxon>
        <taxon>Murinae</taxon>
        <taxon>Mus</taxon>
        <taxon>Mus</taxon>
    </lineage>
</organism>
<proteinExistence type="evidence at protein level"/>
<keyword id="KW-0025">Alternative splicing</keyword>
<keyword id="KW-0963">Cytoplasm</keyword>
<keyword id="KW-0472">Membrane</keyword>
<keyword id="KW-0597">Phosphoprotein</keyword>
<keyword id="KW-1185">Reference proteome</keyword>
<keyword id="KW-0812">Transmembrane</keyword>
<keyword id="KW-1133">Transmembrane helix</keyword>
<feature type="chain" id="PRO_0000279486" description="Transmembrane protein 134">
    <location>
        <begin position="1"/>
        <end position="195"/>
    </location>
</feature>
<feature type="topological domain" description="Cytoplasmic" evidence="2">
    <location>
        <begin position="1"/>
        <end position="122"/>
    </location>
</feature>
<feature type="transmembrane region" description="Helical" evidence="2">
    <location>
        <begin position="123"/>
        <end position="143"/>
    </location>
</feature>
<feature type="topological domain" description="Extracellular" evidence="2">
    <location>
        <begin position="144"/>
        <end position="154"/>
    </location>
</feature>
<feature type="transmembrane region" description="Helical" evidence="2">
    <location>
        <begin position="155"/>
        <end position="175"/>
    </location>
</feature>
<feature type="topological domain" description="Cytoplasmic" evidence="2">
    <location>
        <begin position="176"/>
        <end position="195"/>
    </location>
</feature>
<feature type="region of interest" description="Disordered" evidence="3">
    <location>
        <begin position="14"/>
        <end position="33"/>
    </location>
</feature>
<feature type="region of interest" description="Disordered" evidence="3">
    <location>
        <begin position="48"/>
        <end position="84"/>
    </location>
</feature>
<feature type="compositionally biased region" description="Acidic residues" evidence="3">
    <location>
        <begin position="14"/>
        <end position="23"/>
    </location>
</feature>
<feature type="modified residue" description="Phosphoserine" evidence="6">
    <location>
        <position position="93"/>
    </location>
</feature>
<feature type="splice variant" id="VSP_023455" description="In isoform 3." evidence="4">
    <location>
        <begin position="80"/>
        <end position="88"/>
    </location>
</feature>
<feature type="splice variant" id="VSP_023456" description="In isoform 2." evidence="4">
    <location>
        <begin position="136"/>
        <end position="150"/>
    </location>
</feature>
<feature type="sequence conflict" description="In Ref. 1; BAE38823." evidence="5" ref="1">
    <original>G</original>
    <variation>R</variation>
    <location>
        <position position="66"/>
    </location>
</feature>
<comment type="subcellular location">
    <subcellularLocation>
        <location evidence="5">Membrane</location>
        <topology evidence="5">Multi-pass membrane protein</topology>
    </subcellularLocation>
    <subcellularLocation>
        <location evidence="1">Cytoplasm</location>
        <location evidence="1">Perinuclear region</location>
    </subcellularLocation>
</comment>
<comment type="alternative products">
    <event type="alternative splicing"/>
    <isoform>
        <id>Q8R0J4-1</id>
        <name>1</name>
        <sequence type="displayed"/>
    </isoform>
    <isoform>
        <id>Q8R0J4-2</id>
        <name>2</name>
        <sequence type="described" ref="VSP_023456"/>
    </isoform>
    <isoform>
        <id>Q8R0J4-3</id>
        <name>3</name>
        <sequence type="described" ref="VSP_023455"/>
    </isoform>
</comment>
<comment type="similarity">
    <text evidence="5">Belongs to the TMEM134/TMEM230 family.</text>
</comment>
<sequence>MSAARPQFSIDDAFELTLEDAGPEPESSGVARFGPLHFERRARFEVADEDKQSRLRYQNLENDEDGAQASPEPDGGVSTRDSGHMSVRSSQWSFSTISSSTQRSYNACCSWTQHPLIQKNRRVVLASFLLLLLGLVLILVGVGLEVAPSPGVSSAIFFVPGILLLVPGVYHVIFIYCAVKGRRGFQFFYLPYFEK</sequence>
<dbReference type="EMBL" id="AK002220">
    <property type="protein sequence ID" value="BAB21944.1"/>
    <property type="molecule type" value="mRNA"/>
</dbReference>
<dbReference type="EMBL" id="AK009745">
    <property type="protein sequence ID" value="BAB26475.1"/>
    <property type="molecule type" value="mRNA"/>
</dbReference>
<dbReference type="EMBL" id="AK010323">
    <property type="protein sequence ID" value="BAC25290.1"/>
    <property type="molecule type" value="mRNA"/>
</dbReference>
<dbReference type="EMBL" id="AK166519">
    <property type="protein sequence ID" value="BAE38823.1"/>
    <property type="molecule type" value="mRNA"/>
</dbReference>
<dbReference type="EMBL" id="BC026765">
    <property type="protein sequence ID" value="AAH26765.1"/>
    <property type="molecule type" value="mRNA"/>
</dbReference>
<dbReference type="RefSeq" id="NP_001072117.1">
    <molecule id="Q8R0J4-1"/>
    <property type="nucleotide sequence ID" value="NM_001078649.1"/>
</dbReference>
<dbReference type="RefSeq" id="NP_080165.1">
    <molecule id="Q8R0J4-2"/>
    <property type="nucleotide sequence ID" value="NM_025889.2"/>
</dbReference>
<dbReference type="FunCoup" id="Q8R0J4">
    <property type="interactions" value="492"/>
</dbReference>
<dbReference type="STRING" id="10090.ENSMUSP00000158987"/>
<dbReference type="iPTMnet" id="Q8R0J4"/>
<dbReference type="PhosphoSitePlus" id="Q8R0J4"/>
<dbReference type="SwissPalm" id="Q8R0J4"/>
<dbReference type="jPOST" id="Q8R0J4"/>
<dbReference type="PeptideAtlas" id="Q8R0J4"/>
<dbReference type="ProteomicsDB" id="260675">
    <molecule id="Q8R0J4-1"/>
</dbReference>
<dbReference type="ProteomicsDB" id="260676">
    <molecule id="Q8R0J4-2"/>
</dbReference>
<dbReference type="ProteomicsDB" id="260677">
    <molecule id="Q8R0J4-3"/>
</dbReference>
<dbReference type="Pumba" id="Q8R0J4"/>
<dbReference type="Antibodypedia" id="30426">
    <property type="antibodies" value="65 antibodies from 13 providers"/>
</dbReference>
<dbReference type="DNASU" id="66990"/>
<dbReference type="Ensembl" id="ENSMUST00000139987.10">
    <molecule id="Q8R0J4-3"/>
    <property type="protein sequence ID" value="ENSMUSP00000159417.2"/>
    <property type="gene ID" value="ENSMUSG00000024845.20"/>
</dbReference>
<dbReference type="Ensembl" id="ENSMUST00000140267.10">
    <molecule id="Q8R0J4-1"/>
    <property type="protein sequence ID" value="ENSMUSP00000159415.2"/>
    <property type="gene ID" value="ENSMUSG00000024845.20"/>
</dbReference>
<dbReference type="Ensembl" id="ENSMUST00000150627.11">
    <molecule id="Q8R0J4-2"/>
    <property type="protein sequence ID" value="ENSMUSP00000158987.4"/>
    <property type="gene ID" value="ENSMUSG00000024845.20"/>
</dbReference>
<dbReference type="Ensembl" id="ENSMUST00000169055.10">
    <molecule id="Q8R0J4-2"/>
    <property type="protein sequence ID" value="ENSMUSP00000159412.2"/>
    <property type="gene ID" value="ENSMUSG00000024845.20"/>
</dbReference>
<dbReference type="GeneID" id="66990"/>
<dbReference type="KEGG" id="mmu:66990"/>
<dbReference type="UCSC" id="uc008fyr.1">
    <molecule id="Q8R0J4-1"/>
    <property type="organism name" value="mouse"/>
</dbReference>
<dbReference type="UCSC" id="uc008fys.1">
    <molecule id="Q8R0J4-2"/>
    <property type="organism name" value="mouse"/>
</dbReference>
<dbReference type="AGR" id="MGI:1914240"/>
<dbReference type="CTD" id="80194"/>
<dbReference type="MGI" id="MGI:1914240">
    <property type="gene designation" value="Tmem134"/>
</dbReference>
<dbReference type="VEuPathDB" id="HostDB:ENSMUSG00000024845"/>
<dbReference type="GeneTree" id="ENSGT00390000011766"/>
<dbReference type="InParanoid" id="Q8R0J4"/>
<dbReference type="OrthoDB" id="82048at9989"/>
<dbReference type="PhylomeDB" id="Q8R0J4"/>
<dbReference type="BioGRID-ORCS" id="66990">
    <property type="hits" value="0 hits in 17 CRISPR screens"/>
</dbReference>
<dbReference type="ChiTaRS" id="Tmem134">
    <property type="organism name" value="mouse"/>
</dbReference>
<dbReference type="PRO" id="PR:Q8R0J4"/>
<dbReference type="Proteomes" id="UP000000589">
    <property type="component" value="Chromosome 19"/>
</dbReference>
<dbReference type="RNAct" id="Q8R0J4">
    <property type="molecule type" value="protein"/>
</dbReference>
<dbReference type="Bgee" id="ENSMUSG00000024845">
    <property type="expression patterns" value="Expressed in lip and 175 other cell types or tissues"/>
</dbReference>
<dbReference type="GO" id="GO:0005829">
    <property type="term" value="C:cytosol"/>
    <property type="evidence" value="ECO:0007669"/>
    <property type="project" value="Ensembl"/>
</dbReference>
<dbReference type="GO" id="GO:0016020">
    <property type="term" value="C:membrane"/>
    <property type="evidence" value="ECO:0007669"/>
    <property type="project" value="UniProtKB-SubCell"/>
</dbReference>
<dbReference type="GO" id="GO:0048471">
    <property type="term" value="C:perinuclear region of cytoplasm"/>
    <property type="evidence" value="ECO:0007669"/>
    <property type="project" value="UniProtKB-SubCell"/>
</dbReference>
<dbReference type="InterPro" id="IPR039714">
    <property type="entry name" value="TMEM134"/>
</dbReference>
<dbReference type="InterPro" id="IPR008590">
    <property type="entry name" value="TMEM_230/134"/>
</dbReference>
<dbReference type="PANTHER" id="PTHR13558">
    <property type="entry name" value="TRANSMEMBRANE PROTEIN 134"/>
    <property type="match status" value="1"/>
</dbReference>
<dbReference type="PANTHER" id="PTHR13558:SF1">
    <property type="entry name" value="TRANSMEMBRANE PROTEIN 134"/>
    <property type="match status" value="1"/>
</dbReference>
<dbReference type="Pfam" id="PF05915">
    <property type="entry name" value="TMEM_230_134"/>
    <property type="match status" value="1"/>
</dbReference>
<protein>
    <recommendedName>
        <fullName>Transmembrane protein 134</fullName>
    </recommendedName>
</protein>
<name>TM134_MOUSE</name>
<gene>
    <name type="primary">Tmem134</name>
</gene>
<accession>Q8R0J4</accession>
<accession>Q3TLG9</accession>
<accession>Q8C1M3</accession>
<accession>Q9CR66</accession>